<name>RR11_STIHE</name>
<proteinExistence type="inferred from homology"/>
<organism>
    <name type="scientific">Stigeoclonium helveticum</name>
    <name type="common">Green alga</name>
    <dbReference type="NCBI Taxonomy" id="55999"/>
    <lineage>
        <taxon>Eukaryota</taxon>
        <taxon>Viridiplantae</taxon>
        <taxon>Chlorophyta</taxon>
        <taxon>core chlorophytes</taxon>
        <taxon>Chlorophyceae</taxon>
        <taxon>OCC clade</taxon>
        <taxon>Chaetophorales</taxon>
        <taxon>Chaetophoraceae</taxon>
        <taxon>Stigeoclonium</taxon>
    </lineage>
</organism>
<geneLocation type="chloroplast"/>
<keyword id="KW-0150">Chloroplast</keyword>
<keyword id="KW-0934">Plastid</keyword>
<keyword id="KW-0687">Ribonucleoprotein</keyword>
<keyword id="KW-0689">Ribosomal protein</keyword>
<keyword id="KW-0694">RNA-binding</keyword>
<keyword id="KW-0699">rRNA-binding</keyword>
<comment type="subunit">
    <text evidence="1">Part of the 30S ribosomal subunit.</text>
</comment>
<comment type="subcellular location">
    <subcellularLocation>
        <location>Plastid</location>
        <location>Chloroplast</location>
    </subcellularLocation>
</comment>
<comment type="similarity">
    <text evidence="1">Belongs to the universal ribosomal protein uS11 family.</text>
</comment>
<evidence type="ECO:0000255" key="1">
    <source>
        <dbReference type="HAMAP-Rule" id="MF_01310"/>
    </source>
</evidence>
<evidence type="ECO:0000305" key="2"/>
<reference key="1">
    <citation type="journal article" date="2006" name="Mol. Genet. Genomics">
        <title>Distinctive architecture of the chloroplast genome in the chlorophycean green alga Stigeoclonium helveticum.</title>
        <authorList>
            <person name="Belanger A.-S."/>
            <person name="Brouard J.-S."/>
            <person name="Charlebois P."/>
            <person name="Otis C."/>
            <person name="Lemieux C."/>
            <person name="Turmel M."/>
        </authorList>
    </citation>
    <scope>NUCLEOTIDE SEQUENCE [LARGE SCALE GENOMIC DNA]</scope>
    <source>
        <strain>UTEX 441</strain>
    </source>
</reference>
<accession>Q06SD6</accession>
<sequence length="130" mass="14330">MSKQIRKNVKKPRKKIYRGVVYIQTTQNNTIVTITNIKGDAVCWSSAGSCDLKGRRKATAYAAKLAAANAAKKARREFVLKEAKVLITGPGAARDTAIHEIHKAGIKLTILREKSGVPHNGCRPPKRRRV</sequence>
<gene>
    <name evidence="1" type="primary">rps11</name>
</gene>
<feature type="chain" id="PRO_0000294927" description="Small ribosomal subunit protein uS11c">
    <location>
        <begin position="1"/>
        <end position="130"/>
    </location>
</feature>
<dbReference type="EMBL" id="DQ630521">
    <property type="protein sequence ID" value="ABF60212.1"/>
    <property type="molecule type" value="Genomic_DNA"/>
</dbReference>
<dbReference type="RefSeq" id="YP_764430.1">
    <property type="nucleotide sequence ID" value="NC_008372.1"/>
</dbReference>
<dbReference type="SMR" id="Q06SD6"/>
<dbReference type="GeneID" id="4308440"/>
<dbReference type="GO" id="GO:0009507">
    <property type="term" value="C:chloroplast"/>
    <property type="evidence" value="ECO:0007669"/>
    <property type="project" value="UniProtKB-SubCell"/>
</dbReference>
<dbReference type="GO" id="GO:1990904">
    <property type="term" value="C:ribonucleoprotein complex"/>
    <property type="evidence" value="ECO:0007669"/>
    <property type="project" value="UniProtKB-KW"/>
</dbReference>
<dbReference type="GO" id="GO:0005840">
    <property type="term" value="C:ribosome"/>
    <property type="evidence" value="ECO:0007669"/>
    <property type="project" value="UniProtKB-KW"/>
</dbReference>
<dbReference type="GO" id="GO:0019843">
    <property type="term" value="F:rRNA binding"/>
    <property type="evidence" value="ECO:0007669"/>
    <property type="project" value="UniProtKB-UniRule"/>
</dbReference>
<dbReference type="GO" id="GO:0003735">
    <property type="term" value="F:structural constituent of ribosome"/>
    <property type="evidence" value="ECO:0007669"/>
    <property type="project" value="InterPro"/>
</dbReference>
<dbReference type="GO" id="GO:0006412">
    <property type="term" value="P:translation"/>
    <property type="evidence" value="ECO:0007669"/>
    <property type="project" value="UniProtKB-UniRule"/>
</dbReference>
<dbReference type="Gene3D" id="3.30.420.80">
    <property type="entry name" value="Ribosomal protein S11"/>
    <property type="match status" value="1"/>
</dbReference>
<dbReference type="HAMAP" id="MF_01310">
    <property type="entry name" value="Ribosomal_uS11"/>
    <property type="match status" value="1"/>
</dbReference>
<dbReference type="InterPro" id="IPR001971">
    <property type="entry name" value="Ribosomal_uS11"/>
</dbReference>
<dbReference type="InterPro" id="IPR036967">
    <property type="entry name" value="Ribosomal_uS11_sf"/>
</dbReference>
<dbReference type="NCBIfam" id="NF003698">
    <property type="entry name" value="PRK05309.1"/>
    <property type="match status" value="1"/>
</dbReference>
<dbReference type="PANTHER" id="PTHR11759">
    <property type="entry name" value="40S RIBOSOMAL PROTEIN S14/30S RIBOSOMAL PROTEIN S11"/>
    <property type="match status" value="1"/>
</dbReference>
<dbReference type="Pfam" id="PF00411">
    <property type="entry name" value="Ribosomal_S11"/>
    <property type="match status" value="1"/>
</dbReference>
<dbReference type="PIRSF" id="PIRSF002131">
    <property type="entry name" value="Ribosomal_S11"/>
    <property type="match status" value="1"/>
</dbReference>
<dbReference type="SUPFAM" id="SSF53137">
    <property type="entry name" value="Translational machinery components"/>
    <property type="match status" value="1"/>
</dbReference>
<protein>
    <recommendedName>
        <fullName evidence="1">Small ribosomal subunit protein uS11c</fullName>
    </recommendedName>
    <alternativeName>
        <fullName evidence="2">30S ribosomal protein S11, chloroplastic</fullName>
    </alternativeName>
</protein>